<dbReference type="EMBL" id="AE017199">
    <property type="protein sequence ID" value="AAR39383.1"/>
    <property type="molecule type" value="Genomic_DNA"/>
</dbReference>
<dbReference type="SMR" id="Q74M52"/>
<dbReference type="STRING" id="228908.NEQ543"/>
<dbReference type="EnsemblBacteria" id="AAR39383">
    <property type="protein sequence ID" value="AAR39383"/>
    <property type="gene ID" value="NEQ543"/>
</dbReference>
<dbReference type="KEGG" id="neq:NEQ543"/>
<dbReference type="PATRIC" id="fig|228908.8.peg.563"/>
<dbReference type="HOGENOM" id="CLU_002794_11_1_2"/>
<dbReference type="Proteomes" id="UP000000578">
    <property type="component" value="Chromosome"/>
</dbReference>
<dbReference type="GO" id="GO:0005829">
    <property type="term" value="C:cytosol"/>
    <property type="evidence" value="ECO:0007669"/>
    <property type="project" value="TreeGrafter"/>
</dbReference>
<dbReference type="GO" id="GO:1990904">
    <property type="term" value="C:ribonucleoprotein complex"/>
    <property type="evidence" value="ECO:0007669"/>
    <property type="project" value="TreeGrafter"/>
</dbReference>
<dbReference type="GO" id="GO:0005525">
    <property type="term" value="F:GTP binding"/>
    <property type="evidence" value="ECO:0007669"/>
    <property type="project" value="UniProtKB-UniRule"/>
</dbReference>
<dbReference type="GO" id="GO:0003924">
    <property type="term" value="F:GTPase activity"/>
    <property type="evidence" value="ECO:0007669"/>
    <property type="project" value="InterPro"/>
</dbReference>
<dbReference type="GO" id="GO:0003746">
    <property type="term" value="F:translation elongation factor activity"/>
    <property type="evidence" value="ECO:0007669"/>
    <property type="project" value="UniProtKB-UniRule"/>
</dbReference>
<dbReference type="CDD" id="cd01681">
    <property type="entry name" value="aeEF2_snRNP_like_IV"/>
    <property type="match status" value="1"/>
</dbReference>
<dbReference type="CDD" id="cd01885">
    <property type="entry name" value="EF2"/>
    <property type="match status" value="1"/>
</dbReference>
<dbReference type="CDD" id="cd16268">
    <property type="entry name" value="EF2_II"/>
    <property type="match status" value="1"/>
</dbReference>
<dbReference type="CDD" id="cd16261">
    <property type="entry name" value="EF2_snRNP_III"/>
    <property type="match status" value="1"/>
</dbReference>
<dbReference type="CDD" id="cd01514">
    <property type="entry name" value="Elongation_Factor_C"/>
    <property type="match status" value="1"/>
</dbReference>
<dbReference type="FunFam" id="3.30.70.240:FF:000001">
    <property type="entry name" value="Elongation factor G"/>
    <property type="match status" value="1"/>
</dbReference>
<dbReference type="FunFam" id="3.30.70.870:FF:000002">
    <property type="entry name" value="Translation elongation factor 2"/>
    <property type="match status" value="1"/>
</dbReference>
<dbReference type="Gene3D" id="3.30.230.10">
    <property type="match status" value="1"/>
</dbReference>
<dbReference type="Gene3D" id="3.30.70.240">
    <property type="match status" value="1"/>
</dbReference>
<dbReference type="Gene3D" id="3.30.70.870">
    <property type="entry name" value="Elongation Factor G (Translational Gtpase), domain 3"/>
    <property type="match status" value="1"/>
</dbReference>
<dbReference type="Gene3D" id="3.40.50.300">
    <property type="entry name" value="P-loop containing nucleotide triphosphate hydrolases"/>
    <property type="match status" value="1"/>
</dbReference>
<dbReference type="Gene3D" id="2.40.30.10">
    <property type="entry name" value="Translation factors"/>
    <property type="match status" value="1"/>
</dbReference>
<dbReference type="HAMAP" id="MF_00054_A">
    <property type="entry name" value="EF_G_EF_2_A"/>
    <property type="match status" value="1"/>
</dbReference>
<dbReference type="InterPro" id="IPR041095">
    <property type="entry name" value="EFG_II"/>
</dbReference>
<dbReference type="InterPro" id="IPR035647">
    <property type="entry name" value="EFG_III/V"/>
</dbReference>
<dbReference type="InterPro" id="IPR000640">
    <property type="entry name" value="EFG_V-like"/>
</dbReference>
<dbReference type="InterPro" id="IPR004161">
    <property type="entry name" value="EFTu-like_2"/>
</dbReference>
<dbReference type="InterPro" id="IPR027417">
    <property type="entry name" value="P-loop_NTPase"/>
</dbReference>
<dbReference type="InterPro" id="IPR020568">
    <property type="entry name" value="Ribosomal_Su5_D2-typ_SF"/>
</dbReference>
<dbReference type="InterPro" id="IPR014721">
    <property type="entry name" value="Ribsml_uS5_D2-typ_fold_subgr"/>
</dbReference>
<dbReference type="InterPro" id="IPR005225">
    <property type="entry name" value="Small_GTP-bd"/>
</dbReference>
<dbReference type="InterPro" id="IPR000795">
    <property type="entry name" value="T_Tr_GTP-bd_dom"/>
</dbReference>
<dbReference type="InterPro" id="IPR009000">
    <property type="entry name" value="Transl_B-barrel_sf"/>
</dbReference>
<dbReference type="InterPro" id="IPR004543">
    <property type="entry name" value="Transl_elong_EFG/EF2_arc"/>
</dbReference>
<dbReference type="InterPro" id="IPR005517">
    <property type="entry name" value="Transl_elong_EFG/EF2_IV"/>
</dbReference>
<dbReference type="NCBIfam" id="TIGR00490">
    <property type="entry name" value="aEF-2"/>
    <property type="match status" value="1"/>
</dbReference>
<dbReference type="NCBIfam" id="TIGR00231">
    <property type="entry name" value="small_GTP"/>
    <property type="match status" value="1"/>
</dbReference>
<dbReference type="PANTHER" id="PTHR42908:SF3">
    <property type="entry name" value="ELONGATION FACTOR-LIKE GTPASE 1"/>
    <property type="match status" value="1"/>
</dbReference>
<dbReference type="PANTHER" id="PTHR42908">
    <property type="entry name" value="TRANSLATION ELONGATION FACTOR-RELATED"/>
    <property type="match status" value="1"/>
</dbReference>
<dbReference type="Pfam" id="PF00679">
    <property type="entry name" value="EFG_C"/>
    <property type="match status" value="1"/>
</dbReference>
<dbReference type="Pfam" id="PF14492">
    <property type="entry name" value="EFG_III"/>
    <property type="match status" value="1"/>
</dbReference>
<dbReference type="Pfam" id="PF03764">
    <property type="entry name" value="EFG_IV"/>
    <property type="match status" value="1"/>
</dbReference>
<dbReference type="Pfam" id="PF00009">
    <property type="entry name" value="GTP_EFTU"/>
    <property type="match status" value="1"/>
</dbReference>
<dbReference type="Pfam" id="PF03144">
    <property type="entry name" value="GTP_EFTU_D2"/>
    <property type="match status" value="1"/>
</dbReference>
<dbReference type="PRINTS" id="PR00315">
    <property type="entry name" value="ELONGATNFCT"/>
</dbReference>
<dbReference type="SMART" id="SM00838">
    <property type="entry name" value="EFG_C"/>
    <property type="match status" value="1"/>
</dbReference>
<dbReference type="SMART" id="SM00889">
    <property type="entry name" value="EFG_IV"/>
    <property type="match status" value="1"/>
</dbReference>
<dbReference type="SUPFAM" id="SSF54980">
    <property type="entry name" value="EF-G C-terminal domain-like"/>
    <property type="match status" value="2"/>
</dbReference>
<dbReference type="SUPFAM" id="SSF52540">
    <property type="entry name" value="P-loop containing nucleoside triphosphate hydrolases"/>
    <property type="match status" value="1"/>
</dbReference>
<dbReference type="SUPFAM" id="SSF54211">
    <property type="entry name" value="Ribosomal protein S5 domain 2-like"/>
    <property type="match status" value="1"/>
</dbReference>
<dbReference type="SUPFAM" id="SSF50447">
    <property type="entry name" value="Translation proteins"/>
    <property type="match status" value="1"/>
</dbReference>
<dbReference type="PROSITE" id="PS51722">
    <property type="entry name" value="G_TR_2"/>
    <property type="match status" value="1"/>
</dbReference>
<proteinExistence type="inferred from homology"/>
<keyword id="KW-0963">Cytoplasm</keyword>
<keyword id="KW-0251">Elongation factor</keyword>
<keyword id="KW-0342">GTP-binding</keyword>
<keyword id="KW-0547">Nucleotide-binding</keyword>
<keyword id="KW-0648">Protein biosynthesis</keyword>
<keyword id="KW-1185">Reference proteome</keyword>
<comment type="function">
    <text evidence="1">Catalyzes the GTP-dependent ribosomal translocation step during translation elongation. During this step, the ribosome changes from the pre-translocational (PRE) to the post-translocational (POST) state as the newly formed A-site-bound peptidyl-tRNA and P-site-bound deacylated tRNA move to the P and E sites, respectively. Catalyzes the coordinated movement of the two tRNA molecules, the mRNA and conformational changes in the ribosome.</text>
</comment>
<comment type="subcellular location">
    <subcellularLocation>
        <location evidence="1">Cytoplasm</location>
    </subcellularLocation>
</comment>
<comment type="similarity">
    <text evidence="1">Belongs to the TRAFAC class translation factor GTPase superfamily. Classic translation factor GTPase family. EF-G/EF-2 subfamily.</text>
</comment>
<reference key="1">
    <citation type="journal article" date="2003" name="Proc. Natl. Acad. Sci. U.S.A.">
        <title>The genome of Nanoarchaeum equitans: insights into early archaeal evolution and derived parasitism.</title>
        <authorList>
            <person name="Waters E."/>
            <person name="Hohn M.J."/>
            <person name="Ahel I."/>
            <person name="Graham D.E."/>
            <person name="Adams M.D."/>
            <person name="Barnstead M."/>
            <person name="Beeson K.Y."/>
            <person name="Bibbs L."/>
            <person name="Bolanos R."/>
            <person name="Keller M."/>
            <person name="Kretz K."/>
            <person name="Lin X."/>
            <person name="Mathur E."/>
            <person name="Ni J."/>
            <person name="Podar M."/>
            <person name="Richardson T."/>
            <person name="Sutton G.G."/>
            <person name="Simon M."/>
            <person name="Soell D."/>
            <person name="Stetter K.O."/>
            <person name="Short J.M."/>
            <person name="Noorderwier M."/>
        </authorList>
    </citation>
    <scope>NUCLEOTIDE SEQUENCE [LARGE SCALE GENOMIC DNA]</scope>
    <source>
        <strain>Kin4-M</strain>
    </source>
</reference>
<protein>
    <recommendedName>
        <fullName evidence="1">Elongation factor 2</fullName>
        <shortName evidence="1">EF-2</shortName>
    </recommendedName>
</protein>
<feature type="chain" id="PRO_0000091039" description="Elongation factor 2">
    <location>
        <begin position="1"/>
        <end position="743"/>
    </location>
</feature>
<feature type="domain" description="tr-type G">
    <location>
        <begin position="19"/>
        <end position="265"/>
    </location>
</feature>
<feature type="binding site" evidence="1">
    <location>
        <begin position="28"/>
        <end position="35"/>
    </location>
    <ligand>
        <name>GTP</name>
        <dbReference type="ChEBI" id="CHEBI:37565"/>
    </ligand>
</feature>
<feature type="binding site" evidence="1">
    <location>
        <begin position="94"/>
        <end position="98"/>
    </location>
    <ligand>
        <name>GTP</name>
        <dbReference type="ChEBI" id="CHEBI:37565"/>
    </ligand>
</feature>
<feature type="binding site" evidence="1">
    <location>
        <begin position="148"/>
        <end position="151"/>
    </location>
    <ligand>
        <name>GTP</name>
        <dbReference type="ChEBI" id="CHEBI:37565"/>
    </ligand>
</feature>
<feature type="modified residue" description="Diphthamide" evidence="1">
    <location>
        <position position="615"/>
    </location>
</feature>
<gene>
    <name evidence="1" type="primary">fusA</name>
    <name type="ordered locus">NEQ543</name>
</gene>
<sequence length="743" mass="83701">MVSEKTMAERVLALMGRPNNIRNIGIIAHIHHGKTTLTDNLLAGAGMLSEELAGDAMFTWWHEQEREREMTIYGAAVSMVHEYEGDDYLINLIDTPGHVEFGGEVTRAVRAIDGAVVVVDFVDGIMPQTETVLKQALREYVKPVLFINKVDRAIKELQLPPNKIMERLAEIVVGVNDLIERYAPEEFKDKWKVSVQNGTVAFGSALHNWALSVPYMQKTGIGFKQIAEIYNTAADAKEIRRRVWEIAPLYRVVLDMVVRHLPSPKEAQKYRVPKLWHGDLNSKYGKAMLEADPNGPAVAVVTKVIVDKTSKQETAIARVWSGTIRRGMEVWLLNANKKVRLQQVGVFKGIQKIQIEEAKAGNIIAISGVRDLQSGETIVEPEPDGSKPNIPPFEAIKHIFDPVVTKAIEPKDPRDLPKLIEVLKLIQKEDPTLKVEIDQESGQILISGLGDLHLEIVEYRIKNDFKVDIITSNPIVVYRESVKGQAGPVEGKSPNKLNKFYITVEKMPDELYWKLREKLLKGELPEGKIKKMNEDIIKHLMSLGFTREEAQRCKVIYRENMFFDMTRGIIHIGEVIDMVMDAFMQVMDHGPIAWEPCIGLIVKLTDAQLHEDAIHRGPGQVIPAVREAIKLAMKDAGLVLYEPVQVILVDVPPDYIGDVTALINSRRGAILDIQTEEDRALIKAKVPVREMIGFTDTLRSATSGRGVWYLVDQVYEPVPRELFDQIVREIRQRKGLPLDADIV</sequence>
<evidence type="ECO:0000255" key="1">
    <source>
        <dbReference type="HAMAP-Rule" id="MF_00054"/>
    </source>
</evidence>
<organism>
    <name type="scientific">Nanoarchaeum equitans (strain Kin4-M)</name>
    <dbReference type="NCBI Taxonomy" id="228908"/>
    <lineage>
        <taxon>Archaea</taxon>
        <taxon>Nanobdellota</taxon>
        <taxon>Candidatus Nanoarchaeia</taxon>
        <taxon>Nanoarchaeales</taxon>
        <taxon>Nanoarchaeaceae</taxon>
        <taxon>Nanoarchaeum</taxon>
    </lineage>
</organism>
<name>EF2_NANEQ</name>
<accession>Q74M52</accession>